<dbReference type="EC" id="2.7.7.6" evidence="1"/>
<dbReference type="EMBL" id="AP007281">
    <property type="protein sequence ID" value="BAG25121.1"/>
    <property type="molecule type" value="Genomic_DNA"/>
</dbReference>
<dbReference type="RefSeq" id="WP_003666803.1">
    <property type="nucleotide sequence ID" value="NC_010609.1"/>
</dbReference>
<dbReference type="SMR" id="B2G6N9"/>
<dbReference type="KEGG" id="lrf:LAR_0605"/>
<dbReference type="HOGENOM" id="CLU_187518_0_0_9"/>
<dbReference type="GO" id="GO:0000428">
    <property type="term" value="C:DNA-directed RNA polymerase complex"/>
    <property type="evidence" value="ECO:0007669"/>
    <property type="project" value="UniProtKB-KW"/>
</dbReference>
<dbReference type="GO" id="GO:0003677">
    <property type="term" value="F:DNA binding"/>
    <property type="evidence" value="ECO:0007669"/>
    <property type="project" value="UniProtKB-UniRule"/>
</dbReference>
<dbReference type="GO" id="GO:0003899">
    <property type="term" value="F:DNA-directed RNA polymerase activity"/>
    <property type="evidence" value="ECO:0007669"/>
    <property type="project" value="UniProtKB-UniRule"/>
</dbReference>
<dbReference type="GO" id="GO:0006351">
    <property type="term" value="P:DNA-templated transcription"/>
    <property type="evidence" value="ECO:0007669"/>
    <property type="project" value="UniProtKB-UniRule"/>
</dbReference>
<dbReference type="Gene3D" id="3.10.20.730">
    <property type="entry name" value="RNAP, epsilon subunit-like"/>
    <property type="match status" value="1"/>
</dbReference>
<dbReference type="HAMAP" id="MF_01553">
    <property type="entry name" value="RNApol_bact_RpoY"/>
    <property type="match status" value="1"/>
</dbReference>
<dbReference type="InterPro" id="IPR009907">
    <property type="entry name" value="RpoY"/>
</dbReference>
<dbReference type="NCBIfam" id="NF010188">
    <property type="entry name" value="PRK13667.1"/>
    <property type="match status" value="1"/>
</dbReference>
<dbReference type="Pfam" id="PF07288">
    <property type="entry name" value="RpoY"/>
    <property type="match status" value="1"/>
</dbReference>
<name>RPOY_LIMRJ</name>
<accession>B2G6N9</accession>
<gene>
    <name evidence="1" type="primary">rpoY</name>
    <name type="ordered locus">LAR_0605</name>
</gene>
<keyword id="KW-0240">DNA-directed RNA polymerase</keyword>
<keyword id="KW-0548">Nucleotidyltransferase</keyword>
<keyword id="KW-0804">Transcription</keyword>
<keyword id="KW-0808">Transferase</keyword>
<protein>
    <recommendedName>
        <fullName evidence="1">DNA-directed RNA polymerase subunit epsilon</fullName>
        <shortName evidence="1">RNAP epsilon subunit</shortName>
        <ecNumber evidence="1">2.7.7.6</ecNumber>
    </recommendedName>
    <alternativeName>
        <fullName evidence="1">RNA polymerase epsilon subunit</fullName>
    </alternativeName>
    <alternativeName>
        <fullName evidence="1">Transcriptase subunit epsilon</fullName>
    </alternativeName>
</protein>
<reference key="1">
    <citation type="journal article" date="2008" name="DNA Res.">
        <title>Comparative genome analysis of Lactobacillus reuteri and Lactobacillus fermentum reveal a genomic island for reuterin and cobalamin production.</title>
        <authorList>
            <person name="Morita H."/>
            <person name="Toh H."/>
            <person name="Fukuda S."/>
            <person name="Horikawa H."/>
            <person name="Oshima K."/>
            <person name="Suzuki T."/>
            <person name="Murakami M."/>
            <person name="Hisamatsu S."/>
            <person name="Kato Y."/>
            <person name="Takizawa T."/>
            <person name="Fukuoka H."/>
            <person name="Yoshimura T."/>
            <person name="Itoh K."/>
            <person name="O'Sullivan D.J."/>
            <person name="McKay L.L."/>
            <person name="Ohno H."/>
            <person name="Kikuchi J."/>
            <person name="Masaoka T."/>
            <person name="Hattori M."/>
        </authorList>
    </citation>
    <scope>NUCLEOTIDE SEQUENCE [LARGE SCALE GENOMIC DNA]</scope>
    <source>
        <strain>JCM 1112</strain>
    </source>
</reference>
<feature type="chain" id="PRO_1000199619" description="DNA-directed RNA polymerase subunit epsilon">
    <location>
        <begin position="1"/>
        <end position="70"/>
    </location>
</feature>
<proteinExistence type="inferred from homology"/>
<organism>
    <name type="scientific">Limosilactobacillus reuteri subsp. reuteri (strain JCM 1112)</name>
    <name type="common">Lactobacillus reuteri</name>
    <dbReference type="NCBI Taxonomy" id="557433"/>
    <lineage>
        <taxon>Bacteria</taxon>
        <taxon>Bacillati</taxon>
        <taxon>Bacillota</taxon>
        <taxon>Bacilli</taxon>
        <taxon>Lactobacillales</taxon>
        <taxon>Lactobacillaceae</taxon>
        <taxon>Limosilactobacillus</taxon>
    </lineage>
</organism>
<sequence>MTFKVYYQADKTKRPVRENTQSLYIEADSEAEALLMVEHNTDYNIEFVEQLDEKALAYEKQNPNFKLTTF</sequence>
<evidence type="ECO:0000255" key="1">
    <source>
        <dbReference type="HAMAP-Rule" id="MF_01553"/>
    </source>
</evidence>
<comment type="function">
    <text evidence="1">A non-essential component of RNA polymerase (RNAP).</text>
</comment>
<comment type="catalytic activity">
    <reaction evidence="1">
        <text>RNA(n) + a ribonucleoside 5'-triphosphate = RNA(n+1) + diphosphate</text>
        <dbReference type="Rhea" id="RHEA:21248"/>
        <dbReference type="Rhea" id="RHEA-COMP:14527"/>
        <dbReference type="Rhea" id="RHEA-COMP:17342"/>
        <dbReference type="ChEBI" id="CHEBI:33019"/>
        <dbReference type="ChEBI" id="CHEBI:61557"/>
        <dbReference type="ChEBI" id="CHEBI:140395"/>
        <dbReference type="EC" id="2.7.7.6"/>
    </reaction>
</comment>
<comment type="subunit">
    <text evidence="1">RNAP is composed of a core of 2 alpha, a beta and a beta' subunit. The core is associated with a delta subunit, and at least one of epsilon or omega. When a sigma factor is associated with the core the holoenzyme is formed, which can initiate transcription.</text>
</comment>
<comment type="similarity">
    <text evidence="1">Belongs to the RNA polymerase subunit epsilon family.</text>
</comment>